<evidence type="ECO:0000255" key="1">
    <source>
        <dbReference type="HAMAP-Rule" id="MF_00394"/>
    </source>
</evidence>
<comment type="function">
    <text evidence="1">Catalyzes the reduction of the glycolytic intermediate dihydroxyacetone phosphate (DHAP) to sn-glycerol 3-phosphate (G3P), the key precursor for phospholipid synthesis.</text>
</comment>
<comment type="catalytic activity">
    <reaction evidence="1">
        <text>sn-glycerol 3-phosphate + NAD(+) = dihydroxyacetone phosphate + NADH + H(+)</text>
        <dbReference type="Rhea" id="RHEA:11092"/>
        <dbReference type="ChEBI" id="CHEBI:15378"/>
        <dbReference type="ChEBI" id="CHEBI:57540"/>
        <dbReference type="ChEBI" id="CHEBI:57597"/>
        <dbReference type="ChEBI" id="CHEBI:57642"/>
        <dbReference type="ChEBI" id="CHEBI:57945"/>
        <dbReference type="EC" id="1.1.1.94"/>
    </reaction>
    <physiologicalReaction direction="right-to-left" evidence="1">
        <dbReference type="Rhea" id="RHEA:11094"/>
    </physiologicalReaction>
</comment>
<comment type="catalytic activity">
    <reaction evidence="1">
        <text>sn-glycerol 3-phosphate + NADP(+) = dihydroxyacetone phosphate + NADPH + H(+)</text>
        <dbReference type="Rhea" id="RHEA:11096"/>
        <dbReference type="ChEBI" id="CHEBI:15378"/>
        <dbReference type="ChEBI" id="CHEBI:57597"/>
        <dbReference type="ChEBI" id="CHEBI:57642"/>
        <dbReference type="ChEBI" id="CHEBI:57783"/>
        <dbReference type="ChEBI" id="CHEBI:58349"/>
        <dbReference type="EC" id="1.1.1.94"/>
    </reaction>
    <physiologicalReaction direction="right-to-left" evidence="1">
        <dbReference type="Rhea" id="RHEA:11098"/>
    </physiologicalReaction>
</comment>
<comment type="pathway">
    <text evidence="1">Membrane lipid metabolism; glycerophospholipid metabolism.</text>
</comment>
<comment type="subcellular location">
    <subcellularLocation>
        <location evidence="1">Cytoplasm</location>
    </subcellularLocation>
</comment>
<comment type="similarity">
    <text evidence="1">Belongs to the NAD-dependent glycerol-3-phosphate dehydrogenase family.</text>
</comment>
<reference key="1">
    <citation type="journal article" date="2006" name="J. Bacteriol.">
        <title>The genome sequence of the obligately chemolithoautotrophic, facultatively anaerobic bacterium Thiobacillus denitrificans.</title>
        <authorList>
            <person name="Beller H.R."/>
            <person name="Chain P.S."/>
            <person name="Letain T.E."/>
            <person name="Chakicherla A."/>
            <person name="Larimer F.W."/>
            <person name="Richardson P.M."/>
            <person name="Coleman M.A."/>
            <person name="Wood A.P."/>
            <person name="Kelly D.P."/>
        </authorList>
    </citation>
    <scope>NUCLEOTIDE SEQUENCE [LARGE SCALE GENOMIC DNA]</scope>
    <source>
        <strain>ATCC 25259 / T1</strain>
    </source>
</reference>
<sequence>MKLTVLGAGAWGTALAASWASQHAVTLWGRNARDVDTMRASRVNTHYLPGCPLPSSLALSADFDRALEAAELIVIAVPSSGLRATLAALARRPALPPILWVCKGFEPGTRRLPHQLVAELLPAGAETGVLSGPSFAQEVAHGYPTALTLASADIALAQRLAEALSGNRLRLYAHDDVVGVEIGGALKNVMAIAAGICDGLNFGHNARAALITRGLAEMTRLGVDSGGRFETFMGLSGLGDLILTTTGDLSRNRQVGLRVAKGQPLDRILDELGHVAEGVTTAREVAALAAERGVEMPIARMVCRILFEGLPASEAVDSLLNREIRSEF</sequence>
<feature type="chain" id="PRO_0000255391" description="Glycerol-3-phosphate dehydrogenase [NAD(P)+]">
    <location>
        <begin position="1"/>
        <end position="328"/>
    </location>
</feature>
<feature type="active site" description="Proton acceptor" evidence="1">
    <location>
        <position position="187"/>
    </location>
</feature>
<feature type="binding site" evidence="1">
    <location>
        <position position="11"/>
    </location>
    <ligand>
        <name>NADPH</name>
        <dbReference type="ChEBI" id="CHEBI:57783"/>
    </ligand>
</feature>
<feature type="binding site" evidence="1">
    <location>
        <position position="30"/>
    </location>
    <ligand>
        <name>NADPH</name>
        <dbReference type="ChEBI" id="CHEBI:57783"/>
    </ligand>
</feature>
<feature type="binding site" evidence="1">
    <location>
        <position position="103"/>
    </location>
    <ligand>
        <name>NADPH</name>
        <dbReference type="ChEBI" id="CHEBI:57783"/>
    </ligand>
</feature>
<feature type="binding site" evidence="1">
    <location>
        <position position="103"/>
    </location>
    <ligand>
        <name>sn-glycerol 3-phosphate</name>
        <dbReference type="ChEBI" id="CHEBI:57597"/>
    </ligand>
</feature>
<feature type="binding site" evidence="1">
    <location>
        <position position="132"/>
    </location>
    <ligand>
        <name>sn-glycerol 3-phosphate</name>
        <dbReference type="ChEBI" id="CHEBI:57597"/>
    </ligand>
</feature>
<feature type="binding site" evidence="1">
    <location>
        <position position="134"/>
    </location>
    <ligand>
        <name>sn-glycerol 3-phosphate</name>
        <dbReference type="ChEBI" id="CHEBI:57597"/>
    </ligand>
</feature>
<feature type="binding site" evidence="1">
    <location>
        <position position="136"/>
    </location>
    <ligand>
        <name>NADPH</name>
        <dbReference type="ChEBI" id="CHEBI:57783"/>
    </ligand>
</feature>
<feature type="binding site" evidence="1">
    <location>
        <position position="187"/>
    </location>
    <ligand>
        <name>sn-glycerol 3-phosphate</name>
        <dbReference type="ChEBI" id="CHEBI:57597"/>
    </ligand>
</feature>
<feature type="binding site" evidence="1">
    <location>
        <position position="240"/>
    </location>
    <ligand>
        <name>sn-glycerol 3-phosphate</name>
        <dbReference type="ChEBI" id="CHEBI:57597"/>
    </ligand>
</feature>
<feature type="binding site" evidence="1">
    <location>
        <position position="250"/>
    </location>
    <ligand>
        <name>sn-glycerol 3-phosphate</name>
        <dbReference type="ChEBI" id="CHEBI:57597"/>
    </ligand>
</feature>
<feature type="binding site" evidence="1">
    <location>
        <position position="251"/>
    </location>
    <ligand>
        <name>NADPH</name>
        <dbReference type="ChEBI" id="CHEBI:57783"/>
    </ligand>
</feature>
<feature type="binding site" evidence="1">
    <location>
        <position position="251"/>
    </location>
    <ligand>
        <name>sn-glycerol 3-phosphate</name>
        <dbReference type="ChEBI" id="CHEBI:57597"/>
    </ligand>
</feature>
<feature type="binding site" evidence="1">
    <location>
        <position position="252"/>
    </location>
    <ligand>
        <name>sn-glycerol 3-phosphate</name>
        <dbReference type="ChEBI" id="CHEBI:57597"/>
    </ligand>
</feature>
<feature type="binding site" evidence="1">
    <location>
        <position position="275"/>
    </location>
    <ligand>
        <name>NADPH</name>
        <dbReference type="ChEBI" id="CHEBI:57783"/>
    </ligand>
</feature>
<feature type="binding site" evidence="1">
    <location>
        <position position="277"/>
    </location>
    <ligand>
        <name>NADPH</name>
        <dbReference type="ChEBI" id="CHEBI:57783"/>
    </ligand>
</feature>
<gene>
    <name evidence="1" type="primary">gpsA</name>
    <name type="ordered locus">Tbd_2404</name>
</gene>
<dbReference type="EC" id="1.1.1.94" evidence="1"/>
<dbReference type="EMBL" id="CP000116">
    <property type="protein sequence ID" value="AAZ98357.1"/>
    <property type="molecule type" value="Genomic_DNA"/>
</dbReference>
<dbReference type="RefSeq" id="WP_011312916.1">
    <property type="nucleotide sequence ID" value="NC_007404.1"/>
</dbReference>
<dbReference type="SMR" id="Q3SG93"/>
<dbReference type="STRING" id="292415.Tbd_2404"/>
<dbReference type="KEGG" id="tbd:Tbd_2404"/>
<dbReference type="eggNOG" id="COG0240">
    <property type="taxonomic scope" value="Bacteria"/>
</dbReference>
<dbReference type="HOGENOM" id="CLU_033449_0_2_4"/>
<dbReference type="OrthoDB" id="9812273at2"/>
<dbReference type="UniPathway" id="UPA00940"/>
<dbReference type="Proteomes" id="UP000008291">
    <property type="component" value="Chromosome"/>
</dbReference>
<dbReference type="GO" id="GO:0005829">
    <property type="term" value="C:cytosol"/>
    <property type="evidence" value="ECO:0007669"/>
    <property type="project" value="TreeGrafter"/>
</dbReference>
<dbReference type="GO" id="GO:0047952">
    <property type="term" value="F:glycerol-3-phosphate dehydrogenase [NAD(P)+] activity"/>
    <property type="evidence" value="ECO:0007669"/>
    <property type="project" value="UniProtKB-UniRule"/>
</dbReference>
<dbReference type="GO" id="GO:0051287">
    <property type="term" value="F:NAD binding"/>
    <property type="evidence" value="ECO:0007669"/>
    <property type="project" value="InterPro"/>
</dbReference>
<dbReference type="GO" id="GO:0005975">
    <property type="term" value="P:carbohydrate metabolic process"/>
    <property type="evidence" value="ECO:0007669"/>
    <property type="project" value="InterPro"/>
</dbReference>
<dbReference type="GO" id="GO:0046167">
    <property type="term" value="P:glycerol-3-phosphate biosynthetic process"/>
    <property type="evidence" value="ECO:0007669"/>
    <property type="project" value="UniProtKB-UniRule"/>
</dbReference>
<dbReference type="GO" id="GO:0046168">
    <property type="term" value="P:glycerol-3-phosphate catabolic process"/>
    <property type="evidence" value="ECO:0007669"/>
    <property type="project" value="InterPro"/>
</dbReference>
<dbReference type="GO" id="GO:0006650">
    <property type="term" value="P:glycerophospholipid metabolic process"/>
    <property type="evidence" value="ECO:0007669"/>
    <property type="project" value="UniProtKB-UniRule"/>
</dbReference>
<dbReference type="GO" id="GO:0008654">
    <property type="term" value="P:phospholipid biosynthetic process"/>
    <property type="evidence" value="ECO:0007669"/>
    <property type="project" value="UniProtKB-KW"/>
</dbReference>
<dbReference type="FunFam" id="1.10.1040.10:FF:000001">
    <property type="entry name" value="Glycerol-3-phosphate dehydrogenase [NAD(P)+]"/>
    <property type="match status" value="1"/>
</dbReference>
<dbReference type="FunFam" id="3.40.50.720:FF:000019">
    <property type="entry name" value="Glycerol-3-phosphate dehydrogenase [NAD(P)+]"/>
    <property type="match status" value="1"/>
</dbReference>
<dbReference type="Gene3D" id="1.10.1040.10">
    <property type="entry name" value="N-(1-d-carboxylethyl)-l-norvaline Dehydrogenase, domain 2"/>
    <property type="match status" value="1"/>
</dbReference>
<dbReference type="Gene3D" id="3.40.50.720">
    <property type="entry name" value="NAD(P)-binding Rossmann-like Domain"/>
    <property type="match status" value="1"/>
</dbReference>
<dbReference type="HAMAP" id="MF_00394">
    <property type="entry name" value="NAD_Glyc3P_dehydrog"/>
    <property type="match status" value="1"/>
</dbReference>
<dbReference type="InterPro" id="IPR008927">
    <property type="entry name" value="6-PGluconate_DH-like_C_sf"/>
</dbReference>
<dbReference type="InterPro" id="IPR013328">
    <property type="entry name" value="6PGD_dom2"/>
</dbReference>
<dbReference type="InterPro" id="IPR006168">
    <property type="entry name" value="G3P_DH_NAD-dep"/>
</dbReference>
<dbReference type="InterPro" id="IPR006109">
    <property type="entry name" value="G3P_DH_NAD-dep_C"/>
</dbReference>
<dbReference type="InterPro" id="IPR011128">
    <property type="entry name" value="G3P_DH_NAD-dep_N"/>
</dbReference>
<dbReference type="InterPro" id="IPR036291">
    <property type="entry name" value="NAD(P)-bd_dom_sf"/>
</dbReference>
<dbReference type="NCBIfam" id="NF000940">
    <property type="entry name" value="PRK00094.1-2"/>
    <property type="match status" value="1"/>
</dbReference>
<dbReference type="NCBIfam" id="NF000942">
    <property type="entry name" value="PRK00094.1-4"/>
    <property type="match status" value="1"/>
</dbReference>
<dbReference type="PANTHER" id="PTHR11728">
    <property type="entry name" value="GLYCEROL-3-PHOSPHATE DEHYDROGENASE"/>
    <property type="match status" value="1"/>
</dbReference>
<dbReference type="PANTHER" id="PTHR11728:SF1">
    <property type="entry name" value="GLYCEROL-3-PHOSPHATE DEHYDROGENASE [NAD(+)] 2, CHLOROPLASTIC"/>
    <property type="match status" value="1"/>
</dbReference>
<dbReference type="Pfam" id="PF07479">
    <property type="entry name" value="NAD_Gly3P_dh_C"/>
    <property type="match status" value="1"/>
</dbReference>
<dbReference type="Pfam" id="PF01210">
    <property type="entry name" value="NAD_Gly3P_dh_N"/>
    <property type="match status" value="1"/>
</dbReference>
<dbReference type="PIRSF" id="PIRSF000114">
    <property type="entry name" value="Glycerol-3-P_dh"/>
    <property type="match status" value="1"/>
</dbReference>
<dbReference type="PRINTS" id="PR00077">
    <property type="entry name" value="GPDHDRGNASE"/>
</dbReference>
<dbReference type="SUPFAM" id="SSF48179">
    <property type="entry name" value="6-phosphogluconate dehydrogenase C-terminal domain-like"/>
    <property type="match status" value="1"/>
</dbReference>
<dbReference type="SUPFAM" id="SSF51735">
    <property type="entry name" value="NAD(P)-binding Rossmann-fold domains"/>
    <property type="match status" value="1"/>
</dbReference>
<dbReference type="PROSITE" id="PS00957">
    <property type="entry name" value="NAD_G3PDH"/>
    <property type="match status" value="1"/>
</dbReference>
<organism>
    <name type="scientific">Thiobacillus denitrificans (strain ATCC 25259 / T1)</name>
    <dbReference type="NCBI Taxonomy" id="292415"/>
    <lineage>
        <taxon>Bacteria</taxon>
        <taxon>Pseudomonadati</taxon>
        <taxon>Pseudomonadota</taxon>
        <taxon>Betaproteobacteria</taxon>
        <taxon>Nitrosomonadales</taxon>
        <taxon>Thiobacillaceae</taxon>
        <taxon>Thiobacillus</taxon>
    </lineage>
</organism>
<accession>Q3SG93</accession>
<keyword id="KW-0963">Cytoplasm</keyword>
<keyword id="KW-0444">Lipid biosynthesis</keyword>
<keyword id="KW-0443">Lipid metabolism</keyword>
<keyword id="KW-0520">NAD</keyword>
<keyword id="KW-0521">NADP</keyword>
<keyword id="KW-0547">Nucleotide-binding</keyword>
<keyword id="KW-0560">Oxidoreductase</keyword>
<keyword id="KW-0594">Phospholipid biosynthesis</keyword>
<keyword id="KW-1208">Phospholipid metabolism</keyword>
<keyword id="KW-1185">Reference proteome</keyword>
<proteinExistence type="inferred from homology"/>
<protein>
    <recommendedName>
        <fullName evidence="1">Glycerol-3-phosphate dehydrogenase [NAD(P)+]</fullName>
        <ecNumber evidence="1">1.1.1.94</ecNumber>
    </recommendedName>
    <alternativeName>
        <fullName evidence="1">NAD(P)(+)-dependent glycerol-3-phosphate dehydrogenase</fullName>
    </alternativeName>
    <alternativeName>
        <fullName evidence="1">NAD(P)H-dependent dihydroxyacetone-phosphate reductase</fullName>
    </alternativeName>
</protein>
<name>GPDA_THIDA</name>